<evidence type="ECO:0000250" key="1">
    <source>
        <dbReference type="UniProtKB" id="P60266"/>
    </source>
</evidence>
<evidence type="ECO:0000255" key="2">
    <source>
        <dbReference type="PROSITE-ProRule" id="PRU01210"/>
    </source>
</evidence>
<evidence type="ECO:0000269" key="3">
    <source>
    </source>
</evidence>
<evidence type="ECO:0000303" key="4">
    <source>
    </source>
</evidence>
<evidence type="ECO:0000305" key="5"/>
<evidence type="ECO:0000305" key="6">
    <source>
    </source>
</evidence>
<comment type="function">
    <text evidence="1">Beta toxins bind voltage-independently at site-4 of sodium channels (Nav) and shift the voltage of activation toward more negative potentials thereby affecting sodium channel activation and promoting spontaneous and repetitive firing.</text>
</comment>
<comment type="subcellular location">
    <subcellularLocation>
        <location evidence="3">Secreted</location>
    </subcellularLocation>
</comment>
<comment type="tissue specificity">
    <text evidence="6">Expressed by the venom gland.</text>
</comment>
<comment type="domain">
    <text evidence="5">Has the structural arrangement of an alpha-helix connected to antiparallel beta-sheets by disulfide bonds (CS-alpha/beta).</text>
</comment>
<comment type="mass spectrometry">
    <text>Average mass.</text>
</comment>
<comment type="similarity">
    <text evidence="5">Belongs to the long (4 C-C) scorpion toxin superfamily. Sodium channel inhibitor family. Beta subfamily.</text>
</comment>
<sequence>MKVLILIIASVLLIGVECKDGFPVDSEGCILLPCATRAYCSVNCKFMKGSGGSCDTLACHCKGLPEDAKVQDKPTNKCGRK</sequence>
<name>SCX13_CENTE</name>
<proteinExistence type="evidence at protein level"/>
<organism>
    <name type="scientific">Centruroides tecomanus</name>
    <name type="common">Scorpion</name>
    <name type="synonym">Centruroides limpidus tecomanus</name>
    <dbReference type="NCBI Taxonomy" id="1028682"/>
    <lineage>
        <taxon>Eukaryota</taxon>
        <taxon>Metazoa</taxon>
        <taxon>Ecdysozoa</taxon>
        <taxon>Arthropoda</taxon>
        <taxon>Chelicerata</taxon>
        <taxon>Arachnida</taxon>
        <taxon>Scorpiones</taxon>
        <taxon>Buthida</taxon>
        <taxon>Buthoidea</taxon>
        <taxon>Buthidae</taxon>
        <taxon>Centruroides</taxon>
    </lineage>
</organism>
<keyword id="KW-0027">Amidation</keyword>
<keyword id="KW-0903">Direct protein sequencing</keyword>
<keyword id="KW-1015">Disulfide bond</keyword>
<keyword id="KW-0872">Ion channel impairing toxin</keyword>
<keyword id="KW-0528">Neurotoxin</keyword>
<keyword id="KW-0964">Secreted</keyword>
<keyword id="KW-0732">Signal</keyword>
<keyword id="KW-0800">Toxin</keyword>
<keyword id="KW-0738">Voltage-gated sodium channel impairing toxin</keyword>
<dbReference type="EMBL" id="JZ122277">
    <property type="status" value="NOT_ANNOTATED_CDS"/>
    <property type="molecule type" value="mRNA"/>
</dbReference>
<dbReference type="SMR" id="P0DUI0"/>
<dbReference type="GO" id="GO:0005576">
    <property type="term" value="C:extracellular region"/>
    <property type="evidence" value="ECO:0000314"/>
    <property type="project" value="UniProtKB"/>
</dbReference>
<dbReference type="GO" id="GO:0019871">
    <property type="term" value="F:sodium channel inhibitor activity"/>
    <property type="evidence" value="ECO:0007669"/>
    <property type="project" value="InterPro"/>
</dbReference>
<dbReference type="GO" id="GO:0090729">
    <property type="term" value="F:toxin activity"/>
    <property type="evidence" value="ECO:0007669"/>
    <property type="project" value="UniProtKB-KW"/>
</dbReference>
<dbReference type="CDD" id="cd23106">
    <property type="entry name" value="neurotoxins_LC_scorpion"/>
    <property type="match status" value="1"/>
</dbReference>
<dbReference type="Gene3D" id="3.30.30.10">
    <property type="entry name" value="Knottin, scorpion toxin-like"/>
    <property type="match status" value="1"/>
</dbReference>
<dbReference type="InterPro" id="IPR044062">
    <property type="entry name" value="LCN-type_CS_alpha_beta_dom"/>
</dbReference>
<dbReference type="InterPro" id="IPR036574">
    <property type="entry name" value="Scorpion_toxin-like_sf"/>
</dbReference>
<dbReference type="InterPro" id="IPR002061">
    <property type="entry name" value="Scorpion_toxinL/defensin"/>
</dbReference>
<dbReference type="Pfam" id="PF00537">
    <property type="entry name" value="Toxin_3"/>
    <property type="match status" value="1"/>
</dbReference>
<dbReference type="SUPFAM" id="SSF57095">
    <property type="entry name" value="Scorpion toxin-like"/>
    <property type="match status" value="1"/>
</dbReference>
<dbReference type="PROSITE" id="PS51863">
    <property type="entry name" value="LCN_CSAB"/>
    <property type="match status" value="1"/>
</dbReference>
<accession>P0DUI0</accession>
<reference key="1">
    <citation type="journal article" date="2013" name="PLoS ONE">
        <title>Mass fingerprinting of the venom and transcriptome of venom gland of scorpion Centruroides tecomanus.</title>
        <authorList>
            <person name="Valdez-Velazquez L.L."/>
            <person name="Quintero-Hernandez V."/>
            <person name="Romero-Gutierrez M.T."/>
            <person name="Coronas F.I."/>
            <person name="Possani L.D."/>
        </authorList>
    </citation>
    <scope>NUCLEOTIDE SEQUENCE [MRNA]</scope>
    <scope>PROTEIN SEQUENCE OF 19-78</scope>
    <scope>PROBABLE AMIDATION AT CYS-78</scope>
    <scope>MASS SPECTROMETRY</scope>
    <scope>SUBCELLULAR LOCATION</scope>
    <source>
        <tissue>Venom</tissue>
        <tissue>Venom gland</tissue>
    </source>
</reference>
<protein>
    <recommendedName>
        <fullName evidence="4">Beta-toxin Ct13</fullName>
    </recommendedName>
</protein>
<feature type="signal peptide" evidence="6">
    <location>
        <begin position="1"/>
        <end position="18"/>
    </location>
</feature>
<feature type="chain" id="PRO_0000452427" description="Beta-toxin Ct13" evidence="6">
    <location>
        <begin position="19"/>
        <end position="78"/>
    </location>
</feature>
<feature type="domain" description="LCN-type CS-alpha/beta" evidence="2">
    <location>
        <begin position="19"/>
        <end position="78"/>
    </location>
</feature>
<feature type="modified residue" description="Cysteine amide" evidence="6">
    <location>
        <position position="78"/>
    </location>
</feature>
<feature type="disulfide bond" evidence="2">
    <location>
        <begin position="29"/>
        <end position="78"/>
    </location>
</feature>
<feature type="disulfide bond" evidence="2">
    <location>
        <begin position="34"/>
        <end position="54"/>
    </location>
</feature>
<feature type="disulfide bond" evidence="2">
    <location>
        <begin position="40"/>
        <end position="59"/>
    </location>
</feature>
<feature type="disulfide bond" evidence="2">
    <location>
        <begin position="44"/>
        <end position="61"/>
    </location>
</feature>